<protein>
    <recommendedName>
        <fullName evidence="1">Large ribosomal subunit protein bL28</fullName>
    </recommendedName>
    <alternativeName>
        <fullName evidence="3">50S ribosomal protein L28</fullName>
    </alternativeName>
</protein>
<sequence>MARVCKVTGKRPMSGNNVSHANNKTKRRFLPNLQSRRFWVESENRWVRLRVSNAALRTIDKVGIDVVLADLRARGEA</sequence>
<feature type="chain" id="PRO_0000178514" description="Large ribosomal subunit protein bL28">
    <location>
        <begin position="1"/>
        <end position="77"/>
    </location>
</feature>
<feature type="region of interest" description="Disordered" evidence="2">
    <location>
        <begin position="1"/>
        <end position="26"/>
    </location>
</feature>
<organism>
    <name type="scientific">Neisseria gonorrhoeae (strain ATCC 700825 / FA 1090)</name>
    <dbReference type="NCBI Taxonomy" id="242231"/>
    <lineage>
        <taxon>Bacteria</taxon>
        <taxon>Pseudomonadati</taxon>
        <taxon>Pseudomonadota</taxon>
        <taxon>Betaproteobacteria</taxon>
        <taxon>Neisseriales</taxon>
        <taxon>Neisseriaceae</taxon>
        <taxon>Neisseria</taxon>
    </lineage>
</organism>
<gene>
    <name evidence="1" type="primary">rpmB</name>
    <name type="ordered locus">NGO_1680</name>
</gene>
<name>RL28_NEIG1</name>
<dbReference type="EMBL" id="AE004969">
    <property type="protein sequence ID" value="AAW90305.1"/>
    <property type="molecule type" value="Genomic_DNA"/>
</dbReference>
<dbReference type="RefSeq" id="WP_002216391.1">
    <property type="nucleotide sequence ID" value="NC_002946.2"/>
</dbReference>
<dbReference type="RefSeq" id="YP_208717.1">
    <property type="nucleotide sequence ID" value="NC_002946.2"/>
</dbReference>
<dbReference type="SMR" id="Q5F682"/>
<dbReference type="STRING" id="242231.NGO_1680"/>
<dbReference type="GeneID" id="93387412"/>
<dbReference type="KEGG" id="ngo:NGO_1680"/>
<dbReference type="PATRIC" id="fig|242231.10.peg.2003"/>
<dbReference type="HOGENOM" id="CLU_064548_3_1_4"/>
<dbReference type="PRO" id="PR:Q5F682"/>
<dbReference type="Proteomes" id="UP000000535">
    <property type="component" value="Chromosome"/>
</dbReference>
<dbReference type="GO" id="GO:0022625">
    <property type="term" value="C:cytosolic large ribosomal subunit"/>
    <property type="evidence" value="ECO:0007669"/>
    <property type="project" value="TreeGrafter"/>
</dbReference>
<dbReference type="GO" id="GO:0003735">
    <property type="term" value="F:structural constituent of ribosome"/>
    <property type="evidence" value="ECO:0007669"/>
    <property type="project" value="InterPro"/>
</dbReference>
<dbReference type="GO" id="GO:0006412">
    <property type="term" value="P:translation"/>
    <property type="evidence" value="ECO:0007669"/>
    <property type="project" value="UniProtKB-UniRule"/>
</dbReference>
<dbReference type="FunFam" id="2.30.170.40:FF:000001">
    <property type="entry name" value="50S ribosomal protein L28"/>
    <property type="match status" value="1"/>
</dbReference>
<dbReference type="Gene3D" id="2.30.170.40">
    <property type="entry name" value="Ribosomal protein L28/L24"/>
    <property type="match status" value="1"/>
</dbReference>
<dbReference type="HAMAP" id="MF_00373">
    <property type="entry name" value="Ribosomal_bL28"/>
    <property type="match status" value="1"/>
</dbReference>
<dbReference type="InterPro" id="IPR026569">
    <property type="entry name" value="Ribosomal_bL28"/>
</dbReference>
<dbReference type="InterPro" id="IPR034704">
    <property type="entry name" value="Ribosomal_bL28/bL31-like_sf"/>
</dbReference>
<dbReference type="InterPro" id="IPR001383">
    <property type="entry name" value="Ribosomal_bL28_bact-type"/>
</dbReference>
<dbReference type="InterPro" id="IPR037147">
    <property type="entry name" value="Ribosomal_bL28_sf"/>
</dbReference>
<dbReference type="NCBIfam" id="TIGR00009">
    <property type="entry name" value="L28"/>
    <property type="match status" value="1"/>
</dbReference>
<dbReference type="PANTHER" id="PTHR13528">
    <property type="entry name" value="39S RIBOSOMAL PROTEIN L28, MITOCHONDRIAL"/>
    <property type="match status" value="1"/>
</dbReference>
<dbReference type="PANTHER" id="PTHR13528:SF2">
    <property type="entry name" value="LARGE RIBOSOMAL SUBUNIT PROTEIN BL28M"/>
    <property type="match status" value="1"/>
</dbReference>
<dbReference type="Pfam" id="PF00830">
    <property type="entry name" value="Ribosomal_L28"/>
    <property type="match status" value="1"/>
</dbReference>
<dbReference type="SUPFAM" id="SSF143800">
    <property type="entry name" value="L28p-like"/>
    <property type="match status" value="1"/>
</dbReference>
<evidence type="ECO:0000255" key="1">
    <source>
        <dbReference type="HAMAP-Rule" id="MF_00373"/>
    </source>
</evidence>
<evidence type="ECO:0000256" key="2">
    <source>
        <dbReference type="SAM" id="MobiDB-lite"/>
    </source>
</evidence>
<evidence type="ECO:0000305" key="3"/>
<reference key="1">
    <citation type="submission" date="2003-03" db="EMBL/GenBank/DDBJ databases">
        <title>The complete genome sequence of Neisseria gonorrhoeae.</title>
        <authorList>
            <person name="Lewis L.A."/>
            <person name="Gillaspy A.F."/>
            <person name="McLaughlin R.E."/>
            <person name="Gipson M."/>
            <person name="Ducey T.F."/>
            <person name="Ownbey T."/>
            <person name="Hartman K."/>
            <person name="Nydick C."/>
            <person name="Carson M.B."/>
            <person name="Vaughn J."/>
            <person name="Thomson C."/>
            <person name="Song L."/>
            <person name="Lin S."/>
            <person name="Yuan X."/>
            <person name="Najar F."/>
            <person name="Zhan M."/>
            <person name="Ren Q."/>
            <person name="Zhu H."/>
            <person name="Qi S."/>
            <person name="Kenton S.M."/>
            <person name="Lai H."/>
            <person name="White J.D."/>
            <person name="Clifton S."/>
            <person name="Roe B.A."/>
            <person name="Dyer D.W."/>
        </authorList>
    </citation>
    <scope>NUCLEOTIDE SEQUENCE [LARGE SCALE GENOMIC DNA]</scope>
    <source>
        <strain>ATCC 700825 / FA 1090</strain>
    </source>
</reference>
<comment type="similarity">
    <text evidence="1">Belongs to the bacterial ribosomal protein bL28 family.</text>
</comment>
<proteinExistence type="inferred from homology"/>
<accession>Q5F682</accession>
<keyword id="KW-1185">Reference proteome</keyword>
<keyword id="KW-0687">Ribonucleoprotein</keyword>
<keyword id="KW-0689">Ribosomal protein</keyword>